<name>APOH_MOUSE</name>
<evidence type="ECO:0000250" key="1">
    <source>
        <dbReference type="UniProtKB" id="P17690"/>
    </source>
</evidence>
<evidence type="ECO:0000255" key="2">
    <source>
        <dbReference type="PROSITE-ProRule" id="PRU00302"/>
    </source>
</evidence>
<evidence type="ECO:0000269" key="3">
    <source>
    </source>
</evidence>
<evidence type="ECO:0000269" key="4">
    <source>
    </source>
</evidence>
<evidence type="ECO:0000305" key="5"/>
<keyword id="KW-1015">Disulfide bond</keyword>
<keyword id="KW-0325">Glycoprotein</keyword>
<keyword id="KW-0358">Heparin-binding</keyword>
<keyword id="KW-1185">Reference proteome</keyword>
<keyword id="KW-0677">Repeat</keyword>
<keyword id="KW-0964">Secreted</keyword>
<keyword id="KW-0732">Signal</keyword>
<keyword id="KW-0768">Sushi</keyword>
<organism>
    <name type="scientific">Mus musculus</name>
    <name type="common">Mouse</name>
    <dbReference type="NCBI Taxonomy" id="10090"/>
    <lineage>
        <taxon>Eukaryota</taxon>
        <taxon>Metazoa</taxon>
        <taxon>Chordata</taxon>
        <taxon>Craniata</taxon>
        <taxon>Vertebrata</taxon>
        <taxon>Euteleostomi</taxon>
        <taxon>Mammalia</taxon>
        <taxon>Eutheria</taxon>
        <taxon>Euarchontoglires</taxon>
        <taxon>Glires</taxon>
        <taxon>Rodentia</taxon>
        <taxon>Myomorpha</taxon>
        <taxon>Muroidea</taxon>
        <taxon>Muridae</taxon>
        <taxon>Murinae</taxon>
        <taxon>Mus</taxon>
        <taxon>Mus</taxon>
    </lineage>
</organism>
<sequence>MVSPVLALFSAFLCHVAIAGRICPKPDDLPFATVVPLKTSYDPGEQIVYSCKPGYVSRGGMRRFTCPLTGMWPINTLRCVPRVCPFAGILENGIVRYTSFEYPKNISFACNPGFFLNGTSSSKCTEEGKWSPDIPACARITCPPPPVPKFALLKDYRPSAGNNSLYQDTVVFKCLPHFAMIGNDTVMCTEQGNWTRLPECLEVKCPFPPRPENGYVNYPAKPVLLYKDKATFGCHETYKLDGPEEAECTKTGTWSFLPTCRESCKLPVKKATVLYQGMRVKIQEQFKNGMMHGDKIHFYCKNKEKKCSYTVEAHCRDGTIEIPSCFKEHSSLAFWKTDASELTPC</sequence>
<dbReference type="EMBL" id="D10056">
    <property type="protein sequence ID" value="BAA00945.1"/>
    <property type="molecule type" value="mRNA"/>
</dbReference>
<dbReference type="EMBL" id="S70439">
    <property type="protein sequence ID" value="AAB30789.1"/>
    <property type="molecule type" value="mRNA"/>
</dbReference>
<dbReference type="EMBL" id="Y11356">
    <property type="protein sequence ID" value="CAA72190.1"/>
    <property type="molecule type" value="mRNA"/>
</dbReference>
<dbReference type="EMBL" id="BC019811">
    <property type="protein sequence ID" value="AAH19811.1"/>
    <property type="molecule type" value="mRNA"/>
</dbReference>
<dbReference type="EMBL" id="BC053338">
    <property type="protein sequence ID" value="AAH53338.1"/>
    <property type="molecule type" value="mRNA"/>
</dbReference>
<dbReference type="CCDS" id="CCDS25574.1"/>
<dbReference type="PIR" id="A43286">
    <property type="entry name" value="NBMS"/>
</dbReference>
<dbReference type="RefSeq" id="NP_038503.4">
    <property type="nucleotide sequence ID" value="NM_013475.4"/>
</dbReference>
<dbReference type="SMR" id="Q01339"/>
<dbReference type="BioGRID" id="198165">
    <property type="interactions" value="8"/>
</dbReference>
<dbReference type="FunCoup" id="Q01339">
    <property type="interactions" value="144"/>
</dbReference>
<dbReference type="IntAct" id="Q01339">
    <property type="interactions" value="1"/>
</dbReference>
<dbReference type="STRING" id="10090.ENSMUSP00000000049"/>
<dbReference type="GlyConnect" id="652">
    <property type="glycosylation" value="1 N-Linked glycan (1 site)"/>
</dbReference>
<dbReference type="GlyCosmos" id="Q01339">
    <property type="glycosylation" value="6 sites, 2 glycans"/>
</dbReference>
<dbReference type="GlyGen" id="Q01339">
    <property type="glycosylation" value="7 sites, 5 N-linked glycans (3 sites), 1 O-linked glycan (1 site)"/>
</dbReference>
<dbReference type="iPTMnet" id="Q01339"/>
<dbReference type="PhosphoSitePlus" id="Q01339"/>
<dbReference type="SwissPalm" id="Q01339"/>
<dbReference type="CPTAC" id="non-CPTAC-3894"/>
<dbReference type="jPOST" id="Q01339"/>
<dbReference type="PaxDb" id="10090-ENSMUSP00000000049"/>
<dbReference type="PeptideAtlas" id="Q01339"/>
<dbReference type="ProteomicsDB" id="281901"/>
<dbReference type="Antibodypedia" id="874">
    <property type="antibodies" value="580 antibodies from 42 providers"/>
</dbReference>
<dbReference type="DNASU" id="11818"/>
<dbReference type="Ensembl" id="ENSMUST00000000049.6">
    <property type="protein sequence ID" value="ENSMUSP00000000049.6"/>
    <property type="gene ID" value="ENSMUSG00000000049.12"/>
</dbReference>
<dbReference type="GeneID" id="11818"/>
<dbReference type="KEGG" id="mmu:11818"/>
<dbReference type="UCSC" id="uc007mbp.2">
    <property type="organism name" value="mouse"/>
</dbReference>
<dbReference type="AGR" id="MGI:88058"/>
<dbReference type="CTD" id="350"/>
<dbReference type="MGI" id="MGI:88058">
    <property type="gene designation" value="Apoh"/>
</dbReference>
<dbReference type="VEuPathDB" id="HostDB:ENSMUSG00000000049"/>
<dbReference type="eggNOG" id="KOG4297">
    <property type="taxonomic scope" value="Eukaryota"/>
</dbReference>
<dbReference type="GeneTree" id="ENSGT00940000157228"/>
<dbReference type="HOGENOM" id="CLU_020107_2_0_1"/>
<dbReference type="InParanoid" id="Q01339"/>
<dbReference type="OMA" id="NWSEKPS"/>
<dbReference type="OrthoDB" id="6103690at2759"/>
<dbReference type="PhylomeDB" id="Q01339"/>
<dbReference type="TreeFam" id="TF334137"/>
<dbReference type="Reactome" id="R-MMU-114608">
    <property type="pathway name" value="Platelet degranulation"/>
</dbReference>
<dbReference type="BioGRID-ORCS" id="11818">
    <property type="hits" value="1 hit in 80 CRISPR screens"/>
</dbReference>
<dbReference type="ChiTaRS" id="Apoh">
    <property type="organism name" value="mouse"/>
</dbReference>
<dbReference type="PRO" id="PR:Q01339"/>
<dbReference type="Proteomes" id="UP000000589">
    <property type="component" value="Chromosome 11"/>
</dbReference>
<dbReference type="RNAct" id="Q01339">
    <property type="molecule type" value="protein"/>
</dbReference>
<dbReference type="Bgee" id="ENSMUSG00000000049">
    <property type="expression patterns" value="Expressed in left lobe of liver and 63 other cell types or tissues"/>
</dbReference>
<dbReference type="ExpressionAtlas" id="Q01339">
    <property type="expression patterns" value="baseline and differential"/>
</dbReference>
<dbReference type="GO" id="GO:0009986">
    <property type="term" value="C:cell surface"/>
    <property type="evidence" value="ECO:0007669"/>
    <property type="project" value="Ensembl"/>
</dbReference>
<dbReference type="GO" id="GO:0042627">
    <property type="term" value="C:chylomicron"/>
    <property type="evidence" value="ECO:0007669"/>
    <property type="project" value="Ensembl"/>
</dbReference>
<dbReference type="GO" id="GO:0005615">
    <property type="term" value="C:extracellular space"/>
    <property type="evidence" value="ECO:0000314"/>
    <property type="project" value="MGI"/>
</dbReference>
<dbReference type="GO" id="GO:0034364">
    <property type="term" value="C:high-density lipoprotein particle"/>
    <property type="evidence" value="ECO:0007669"/>
    <property type="project" value="Ensembl"/>
</dbReference>
<dbReference type="GO" id="GO:0034361">
    <property type="term" value="C:very-low-density lipoprotein particle"/>
    <property type="evidence" value="ECO:0007669"/>
    <property type="project" value="Ensembl"/>
</dbReference>
<dbReference type="GO" id="GO:0008201">
    <property type="term" value="F:heparin binding"/>
    <property type="evidence" value="ECO:0007669"/>
    <property type="project" value="UniProtKB-KW"/>
</dbReference>
<dbReference type="GO" id="GO:0042802">
    <property type="term" value="F:identical protein binding"/>
    <property type="evidence" value="ECO:0007669"/>
    <property type="project" value="Ensembl"/>
</dbReference>
<dbReference type="GO" id="GO:0060230">
    <property type="term" value="F:lipoprotein lipase activator activity"/>
    <property type="evidence" value="ECO:0007669"/>
    <property type="project" value="Ensembl"/>
</dbReference>
<dbReference type="GO" id="GO:0005543">
    <property type="term" value="F:phospholipid binding"/>
    <property type="evidence" value="ECO:0007669"/>
    <property type="project" value="Ensembl"/>
</dbReference>
<dbReference type="GO" id="GO:0007597">
    <property type="term" value="P:blood coagulation, intrinsic pathway"/>
    <property type="evidence" value="ECO:0007669"/>
    <property type="project" value="Ensembl"/>
</dbReference>
<dbReference type="GO" id="GO:0016525">
    <property type="term" value="P:negative regulation of angiogenesis"/>
    <property type="evidence" value="ECO:0007669"/>
    <property type="project" value="Ensembl"/>
</dbReference>
<dbReference type="GO" id="GO:0030195">
    <property type="term" value="P:negative regulation of blood coagulation"/>
    <property type="evidence" value="ECO:0007669"/>
    <property type="project" value="Ensembl"/>
</dbReference>
<dbReference type="GO" id="GO:0010596">
    <property type="term" value="P:negative regulation of endothelial cell migration"/>
    <property type="evidence" value="ECO:0007669"/>
    <property type="project" value="Ensembl"/>
</dbReference>
<dbReference type="GO" id="GO:0001937">
    <property type="term" value="P:negative regulation of endothelial cell proliferation"/>
    <property type="evidence" value="ECO:0007669"/>
    <property type="project" value="Ensembl"/>
</dbReference>
<dbReference type="GO" id="GO:0051918">
    <property type="term" value="P:negative regulation of fibrinolysis"/>
    <property type="evidence" value="ECO:0007669"/>
    <property type="project" value="Ensembl"/>
</dbReference>
<dbReference type="GO" id="GO:0033033">
    <property type="term" value="P:negative regulation of myeloid cell apoptotic process"/>
    <property type="evidence" value="ECO:0007669"/>
    <property type="project" value="Ensembl"/>
</dbReference>
<dbReference type="GO" id="GO:0034392">
    <property type="term" value="P:negative regulation of smooth muscle cell apoptotic process"/>
    <property type="evidence" value="ECO:0007669"/>
    <property type="project" value="Ensembl"/>
</dbReference>
<dbReference type="GO" id="GO:0031639">
    <property type="term" value="P:plasminogen activation"/>
    <property type="evidence" value="ECO:0007669"/>
    <property type="project" value="Ensembl"/>
</dbReference>
<dbReference type="GO" id="GO:0030193">
    <property type="term" value="P:regulation of blood coagulation"/>
    <property type="evidence" value="ECO:0000315"/>
    <property type="project" value="MGI"/>
</dbReference>
<dbReference type="GO" id="GO:0006641">
    <property type="term" value="P:triglyceride metabolic process"/>
    <property type="evidence" value="ECO:0007669"/>
    <property type="project" value="Ensembl"/>
</dbReference>
<dbReference type="CDD" id="cd00033">
    <property type="entry name" value="CCP"/>
    <property type="match status" value="4"/>
</dbReference>
<dbReference type="FunFam" id="2.10.70.10:FF:000089">
    <property type="entry name" value="Beta-2-glycoprotein 1"/>
    <property type="match status" value="1"/>
</dbReference>
<dbReference type="Gene3D" id="2.10.70.10">
    <property type="entry name" value="Complement Module, domain 1"/>
    <property type="match status" value="5"/>
</dbReference>
<dbReference type="InterPro" id="IPR050350">
    <property type="entry name" value="Compl-Cell_Adhes-Reg"/>
</dbReference>
<dbReference type="InterPro" id="IPR035976">
    <property type="entry name" value="Sushi/SCR/CCP_sf"/>
</dbReference>
<dbReference type="InterPro" id="IPR015104">
    <property type="entry name" value="Sushi_2"/>
</dbReference>
<dbReference type="InterPro" id="IPR000436">
    <property type="entry name" value="Sushi_SCR_CCP_dom"/>
</dbReference>
<dbReference type="PANTHER" id="PTHR19325:SF549">
    <property type="entry name" value="BETA-2-GLYCOPROTEIN 1"/>
    <property type="match status" value="1"/>
</dbReference>
<dbReference type="PANTHER" id="PTHR19325">
    <property type="entry name" value="COMPLEMENT COMPONENT-RELATED SUSHI DOMAIN-CONTAINING"/>
    <property type="match status" value="1"/>
</dbReference>
<dbReference type="Pfam" id="PF00084">
    <property type="entry name" value="Sushi"/>
    <property type="match status" value="4"/>
</dbReference>
<dbReference type="Pfam" id="PF09014">
    <property type="entry name" value="Sushi_2"/>
    <property type="match status" value="1"/>
</dbReference>
<dbReference type="SMART" id="SM00032">
    <property type="entry name" value="CCP"/>
    <property type="match status" value="5"/>
</dbReference>
<dbReference type="SUPFAM" id="SSF57535">
    <property type="entry name" value="Complement control module/SCR domain"/>
    <property type="match status" value="5"/>
</dbReference>
<dbReference type="PROSITE" id="PS50923">
    <property type="entry name" value="SUSHI"/>
    <property type="match status" value="4"/>
</dbReference>
<accession>Q01339</accession>
<comment type="function">
    <text>Binds to various kinds of negatively charged substances such as heparin, phospholipids, and dextran sulfate. May prevent activation of the intrinsic blood coagulation cascade by binding to phospholipids on the surface of damaged cells.</text>
</comment>
<comment type="subcellular location">
    <subcellularLocation>
        <location>Secreted</location>
    </subcellularLocation>
</comment>
<comment type="tissue specificity">
    <text>Expressed by the liver and secreted in plasma.</text>
</comment>
<protein>
    <recommendedName>
        <fullName>Beta-2-glycoprotein 1</fullName>
    </recommendedName>
    <alternativeName>
        <fullName>APC inhibitor</fullName>
    </alternativeName>
    <alternativeName>
        <fullName>Activated protein C-binding protein</fullName>
    </alternativeName>
    <alternativeName>
        <fullName>Apolipoprotein H</fullName>
        <shortName>Apo-H</shortName>
    </alternativeName>
    <alternativeName>
        <fullName>Beta-2-glycoprotein I</fullName>
        <shortName>B2GPI</shortName>
        <shortName>Beta(2)GPI</shortName>
    </alternativeName>
</protein>
<reference key="1">
    <citation type="journal article" date="1992" name="Genomics">
        <title>Molecular cloning of mouse beta 2-glycoprotein I and mapping of the gene to chromosome 11.</title>
        <authorList>
            <person name="Nonaka M."/>
            <person name="Matsuda Y."/>
            <person name="Shiroishi T."/>
            <person name="Moriwak K."/>
            <person name="Natsuume-Sakai S."/>
        </authorList>
    </citation>
    <scope>NUCLEOTIDE SEQUENCE [MRNA]</scope>
</reference>
<reference key="2">
    <citation type="journal article" date="1994" name="Biochem. Biophys. Res. Commun.">
        <title>Characterization, expression and evolution of mouse beta 2-glycoprotein I (apolipoprotein H).</title>
        <authorList>
            <person name="Sellar G.C."/>
            <person name="Steel D.M."/>
            <person name="Zafiropoulos A."/>
            <person name="Seery L.T."/>
            <person name="Whitehead A.S."/>
        </authorList>
    </citation>
    <scope>NUCLEOTIDE SEQUENCE [MRNA]</scope>
    <source>
        <strain>CBA/J</strain>
        <tissue>Liver</tissue>
    </source>
</reference>
<reference key="3">
    <citation type="submission" date="1997-02" db="EMBL/GenBank/DDBJ databases">
        <title>Structure of the human beta-2-glycoprotein I gene.</title>
        <authorList>
            <person name="Kristensen T."/>
        </authorList>
    </citation>
    <scope>NUCLEOTIDE SEQUENCE [MRNA]</scope>
    <source>
        <strain>BALB/cJ</strain>
        <tissue>Liver</tissue>
    </source>
</reference>
<reference key="4">
    <citation type="journal article" date="2004" name="Genome Res.">
        <title>The status, quality, and expansion of the NIH full-length cDNA project: the Mammalian Gene Collection (MGC).</title>
        <authorList>
            <consortium name="The MGC Project Team"/>
        </authorList>
    </citation>
    <scope>NUCLEOTIDE SEQUENCE [LARGE SCALE MRNA]</scope>
    <source>
        <strain>FVB/N</strain>
        <tissue>Liver</tissue>
    </source>
</reference>
<reference key="5">
    <citation type="journal article" date="2006" name="J. Proteome Res.">
        <title>Proteome-wide characterization of N-glycosylation events by diagonal chromatography.</title>
        <authorList>
            <person name="Ghesquiere B."/>
            <person name="Van Damme J."/>
            <person name="Martens L."/>
            <person name="Vandekerckhove J."/>
            <person name="Gevaert K."/>
        </authorList>
    </citation>
    <scope>GLYCOSYLATION [LARGE SCALE ANALYSIS] AT ASN-117 AND ASN-162</scope>
    <source>
        <strain>C57BL/6J</strain>
        <tissue>Plasma</tissue>
    </source>
</reference>
<reference key="6">
    <citation type="journal article" date="2007" name="J. Proteome Res.">
        <title>Enhanced analysis of the mouse plasma proteome using cysteine-containing tryptic glycopeptides.</title>
        <authorList>
            <person name="Bernhard O.K."/>
            <person name="Kapp E.A."/>
            <person name="Simpson R.J."/>
        </authorList>
    </citation>
    <scope>GLYCOSYLATION [LARGE SCALE ANALYSIS] AT ASN-105; ASN-117; ASN-162; ASN-183 AND ASN-193</scope>
    <source>
        <strain>C57BL/6J</strain>
        <tissue>Plasma</tissue>
    </source>
</reference>
<reference key="7">
    <citation type="journal article" date="2010" name="Cell">
        <title>A tissue-specific atlas of mouse protein phosphorylation and expression.</title>
        <authorList>
            <person name="Huttlin E.L."/>
            <person name="Jedrychowski M.P."/>
            <person name="Elias J.E."/>
            <person name="Goswami T."/>
            <person name="Rad R."/>
            <person name="Beausoleil S.A."/>
            <person name="Villen J."/>
            <person name="Haas W."/>
            <person name="Sowa M.E."/>
            <person name="Gygi S.P."/>
        </authorList>
    </citation>
    <scope>IDENTIFICATION BY MASS SPECTROMETRY [LARGE SCALE ANALYSIS]</scope>
    <source>
        <tissue>Brown adipose tissue</tissue>
        <tissue>Heart</tissue>
        <tissue>Kidney</tissue>
        <tissue>Liver</tissue>
        <tissue>Lung</tissue>
        <tissue>Pancreas</tissue>
        <tissue>Spleen</tissue>
        <tissue>Testis</tissue>
    </source>
</reference>
<proteinExistence type="evidence at protein level"/>
<feature type="signal peptide">
    <location>
        <begin position="1"/>
        <end position="19"/>
    </location>
</feature>
<feature type="chain" id="PRO_0000002060" description="Beta-2-glycoprotein 1">
    <location>
        <begin position="20"/>
        <end position="345"/>
    </location>
</feature>
<feature type="domain" description="Sushi 1" evidence="2">
    <location>
        <begin position="21"/>
        <end position="81"/>
    </location>
</feature>
<feature type="domain" description="Sushi 2" evidence="2">
    <location>
        <begin position="82"/>
        <end position="139"/>
    </location>
</feature>
<feature type="domain" description="Sushi 3" evidence="2">
    <location>
        <begin position="140"/>
        <end position="202"/>
    </location>
</feature>
<feature type="domain" description="Sushi 4" evidence="2">
    <location>
        <begin position="203"/>
        <end position="262"/>
    </location>
</feature>
<feature type="region of interest" description="Sushi-like">
    <location>
        <begin position="263"/>
        <end position="345"/>
    </location>
</feature>
<feature type="glycosylation site" description="O-linked (GalNAc...) threonine" evidence="1">
    <location>
        <position position="33"/>
    </location>
</feature>
<feature type="glycosylation site" description="N-linked (GlcNAc...) asparagine" evidence="4">
    <location>
        <position position="105"/>
    </location>
</feature>
<feature type="glycosylation site" description="N-linked (GlcNAc...) asparagine" evidence="3 4">
    <location>
        <position position="117"/>
    </location>
</feature>
<feature type="glycosylation site" description="N-linked (GlcNAc...) asparagine" evidence="3 4">
    <location>
        <position position="162"/>
    </location>
</feature>
<feature type="glycosylation site" description="N-linked (GlcNAc...) asparagine" evidence="4">
    <location>
        <position position="183"/>
    </location>
</feature>
<feature type="glycosylation site" description="N-linked (GlcNAc...) asparagine" evidence="4">
    <location>
        <position position="193"/>
    </location>
</feature>
<feature type="disulfide bond" evidence="2">
    <location>
        <begin position="23"/>
        <end position="66"/>
    </location>
</feature>
<feature type="disulfide bond" evidence="2">
    <location>
        <begin position="51"/>
        <end position="79"/>
    </location>
</feature>
<feature type="disulfide bond" evidence="2">
    <location>
        <begin position="84"/>
        <end position="124"/>
    </location>
</feature>
<feature type="disulfide bond" evidence="2">
    <location>
        <begin position="110"/>
        <end position="137"/>
    </location>
</feature>
<feature type="disulfide bond" evidence="2">
    <location>
        <begin position="142"/>
        <end position="188"/>
    </location>
</feature>
<feature type="disulfide bond" evidence="2">
    <location>
        <begin position="174"/>
        <end position="200"/>
    </location>
</feature>
<feature type="disulfide bond" evidence="2">
    <location>
        <begin position="205"/>
        <end position="248"/>
    </location>
</feature>
<feature type="disulfide bond" evidence="2">
    <location>
        <begin position="234"/>
        <end position="260"/>
    </location>
</feature>
<feature type="disulfide bond" evidence="2">
    <location>
        <begin position="264"/>
        <end position="315"/>
    </location>
</feature>
<feature type="disulfide bond" evidence="2">
    <location>
        <begin position="300"/>
        <end position="325"/>
    </location>
</feature>
<feature type="disulfide bond" evidence="2">
    <location>
        <begin position="307"/>
        <end position="345"/>
    </location>
</feature>
<feature type="sequence conflict" description="In Ref. 2; AAB30789." evidence="5" ref="2">
    <original>G</original>
    <variation>R</variation>
    <location>
        <position position="252"/>
    </location>
</feature>
<gene>
    <name type="primary">Apoh</name>
    <name type="synonym">B2gp1</name>
</gene>